<protein>
    <recommendedName>
        <fullName>Coenzyme PQQ synthesis protein A</fullName>
    </recommendedName>
    <alternativeName>
        <fullName>Pyrroloquinoline quinone biosynthesis protein A</fullName>
    </alternativeName>
</protein>
<proteinExistence type="inferred from homology"/>
<sequence>MAWNTPKVTEIPLGAEINSYVCGEKK</sequence>
<gene>
    <name type="primary">pqqA</name>
    <name type="ordered locus">GOX0987</name>
</gene>
<name>PQQA_GLUOX</name>
<accession>Q9L3B4</accession>
<accession>Q5FS87</accession>
<organism>
    <name type="scientific">Gluconobacter oxydans (strain 621H)</name>
    <name type="common">Gluconobacter suboxydans</name>
    <dbReference type="NCBI Taxonomy" id="290633"/>
    <lineage>
        <taxon>Bacteria</taxon>
        <taxon>Pseudomonadati</taxon>
        <taxon>Pseudomonadota</taxon>
        <taxon>Alphaproteobacteria</taxon>
        <taxon>Acetobacterales</taxon>
        <taxon>Acetobacteraceae</taxon>
        <taxon>Gluconobacter</taxon>
    </lineage>
</organism>
<comment type="function">
    <text evidence="1">Required for coenzyme pyrroloquinoline quinone (PQQ) biosynthesis. PQQ is probably formed by cross-linking a specific glutamate to a specific tyrosine residue and excising these residues from the peptide (By similarity).</text>
</comment>
<comment type="pathway">
    <text>Cofactor biosynthesis; pyrroloquinoline quinone biosynthesis.</text>
</comment>
<comment type="similarity">
    <text evidence="2">Belongs to the PqqA family.</text>
</comment>
<reference key="1">
    <citation type="journal article" date="2000" name="FEMS Microbiol. Lett.">
        <title>The pyrroloquinoline quinone synthesis genes of Gluconobacter oxydans.</title>
        <authorList>
            <person name="Felder M."/>
            <person name="Gupta A."/>
            <person name="Verma V."/>
            <person name="Kumar A."/>
            <person name="Qazi G.N."/>
            <person name="Cullum J."/>
        </authorList>
    </citation>
    <scope>NUCLEOTIDE SEQUENCE [GENOMIC DNA]</scope>
    <source>
        <strain>ATCC 9937 / LMG 1404 / NCIMB 8084</strain>
    </source>
</reference>
<reference key="2">
    <citation type="journal article" date="2005" name="Nat. Biotechnol.">
        <title>Complete genome sequence of the acetic acid bacterium Gluconobacter oxydans.</title>
        <authorList>
            <person name="Prust C."/>
            <person name="Hoffmeister M."/>
            <person name="Liesegang H."/>
            <person name="Wiezer A."/>
            <person name="Fricke W.F."/>
            <person name="Ehrenreich A."/>
            <person name="Gottschalk G."/>
            <person name="Deppenmeier U."/>
        </authorList>
    </citation>
    <scope>NUCLEOTIDE SEQUENCE [LARGE SCALE GENOMIC DNA]</scope>
    <source>
        <strain>621H</strain>
    </source>
</reference>
<evidence type="ECO:0000250" key="1"/>
<evidence type="ECO:0000305" key="2"/>
<keyword id="KW-0884">PQQ biosynthesis</keyword>
<keyword id="KW-1185">Reference proteome</keyword>
<dbReference type="EMBL" id="AJ277117">
    <property type="protein sequence ID" value="CAB83197.1"/>
    <property type="molecule type" value="Genomic_DNA"/>
</dbReference>
<dbReference type="EMBL" id="CP000009">
    <property type="protein sequence ID" value="AAW60759.1"/>
    <property type="molecule type" value="Genomic_DNA"/>
</dbReference>
<dbReference type="RefSeq" id="WP_010502998.1">
    <property type="nucleotide sequence ID" value="NZ_LT900338.1"/>
</dbReference>
<dbReference type="STRING" id="290633.GOX0987"/>
<dbReference type="GeneID" id="89650082"/>
<dbReference type="KEGG" id="gox:GOX0987"/>
<dbReference type="HOGENOM" id="CLU_219399_2_0_5"/>
<dbReference type="UniPathway" id="UPA00539"/>
<dbReference type="Proteomes" id="UP000006375">
    <property type="component" value="Chromosome"/>
</dbReference>
<dbReference type="GO" id="GO:0018189">
    <property type="term" value="P:pyrroloquinoline quinone biosynthetic process"/>
    <property type="evidence" value="ECO:0007669"/>
    <property type="project" value="UniProtKB-UniRule"/>
</dbReference>
<dbReference type="HAMAP" id="MF_00656">
    <property type="entry name" value="PQQ_syn_PqqA"/>
    <property type="match status" value="1"/>
</dbReference>
<dbReference type="InterPro" id="IPR011725">
    <property type="entry name" value="PQQ_synth_PqqA"/>
</dbReference>
<dbReference type="NCBIfam" id="TIGR02107">
    <property type="entry name" value="PQQ_syn_pqqA"/>
    <property type="match status" value="1"/>
</dbReference>
<dbReference type="Pfam" id="PF08042">
    <property type="entry name" value="PqqA"/>
    <property type="match status" value="1"/>
</dbReference>
<feature type="chain" id="PRO_0000220308" description="Coenzyme PQQ synthesis protein A">
    <location>
        <begin position="1"/>
        <end position="26"/>
    </location>
</feature>
<feature type="cross-link" description="Pyrroloquinoline quinone (Glu-Tyr)" evidence="1">
    <location>
        <begin position="16"/>
        <end position="20"/>
    </location>
</feature>